<accession>Q60698</accession>
<accession>Q8VIL5</accession>
<reference key="1">
    <citation type="submission" date="2001-10" db="EMBL/GenBank/DDBJ databases">
        <title>Mouse Ski proto-oncogene cDNA.</title>
        <authorList>
            <person name="Chen Y."/>
            <person name="Berk M."/>
            <person name="Chen H."/>
            <person name="Stavnezer E."/>
            <person name="Colmenares C."/>
        </authorList>
    </citation>
    <scope>NUCLEOTIDE SEQUENCE [MRNA]</scope>
    <source>
        <strain>129/Sv</strain>
    </source>
</reference>
<reference key="2">
    <citation type="journal article" date="1995" name="Dev. Dyn.">
        <title>Enhanced expression of mouse c-ski accompanies terminal skeletal muscle differentiation in vivo and in vitro.</title>
        <authorList>
            <person name="Namciu S."/>
            <person name="Lyons G.E."/>
            <person name="Micales B.K."/>
            <person name="Heyman H.-C."/>
            <person name="Colmenares C."/>
            <person name="Stavnezer E."/>
        </authorList>
    </citation>
    <scope>NUCLEOTIDE SEQUENCE [GENOMIC DNA] OF 1-324</scope>
    <source>
        <strain>129/J</strain>
    </source>
</reference>
<reference key="3">
    <citation type="journal article" date="2010" name="Cell">
        <title>A tissue-specific atlas of mouse protein phosphorylation and expression.</title>
        <authorList>
            <person name="Huttlin E.L."/>
            <person name="Jedrychowski M.P."/>
            <person name="Elias J.E."/>
            <person name="Goswami T."/>
            <person name="Rad R."/>
            <person name="Beausoleil S.A."/>
            <person name="Villen J."/>
            <person name="Haas W."/>
            <person name="Sowa M.E."/>
            <person name="Gygi S.P."/>
        </authorList>
    </citation>
    <scope>IDENTIFICATION BY MASS SPECTROMETRY [LARGE SCALE ANALYSIS]</scope>
    <source>
        <tissue>Brain</tissue>
        <tissue>Brown adipose tissue</tissue>
        <tissue>Kidney</tissue>
        <tissue>Lung</tissue>
    </source>
</reference>
<reference key="4">
    <citation type="journal article" date="2013" name="PLoS Biol.">
        <title>Rnf165/Ark2C enhances BMP-Smad signaling to mediate motor axon extension.</title>
        <authorList>
            <person name="Kelly C.E."/>
            <person name="Thymiakou E."/>
            <person name="Dixon J.E."/>
            <person name="Tanaka S."/>
            <person name="Godwin J."/>
            <person name="Episkopou V."/>
        </authorList>
    </citation>
    <scope>UBIQUITINATION</scope>
</reference>
<feature type="chain" id="PRO_0000129383" description="Ski oncogene">
    <location>
        <begin position="1"/>
        <end position="725"/>
    </location>
</feature>
<feature type="region of interest" description="Disordered" evidence="4">
    <location>
        <begin position="1"/>
        <end position="77"/>
    </location>
</feature>
<feature type="region of interest" description="Disordered" evidence="4">
    <location>
        <begin position="319"/>
        <end position="352"/>
    </location>
</feature>
<feature type="region of interest" description="Disordered" evidence="4">
    <location>
        <begin position="457"/>
        <end position="521"/>
    </location>
</feature>
<feature type="region of interest" description="Disordered" evidence="4">
    <location>
        <begin position="697"/>
        <end position="725"/>
    </location>
</feature>
<feature type="coiled-coil region" evidence="3">
    <location>
        <begin position="534"/>
        <end position="708"/>
    </location>
</feature>
<feature type="compositionally biased region" description="Polar residues" evidence="4">
    <location>
        <begin position="14"/>
        <end position="30"/>
    </location>
</feature>
<feature type="compositionally biased region" description="Basic and acidic residues" evidence="4">
    <location>
        <begin position="40"/>
        <end position="51"/>
    </location>
</feature>
<feature type="compositionally biased region" description="Pro residues" evidence="4">
    <location>
        <begin position="60"/>
        <end position="77"/>
    </location>
</feature>
<feature type="compositionally biased region" description="Acidic residues" evidence="4">
    <location>
        <begin position="471"/>
        <end position="482"/>
    </location>
</feature>
<feature type="compositionally biased region" description="Low complexity" evidence="4">
    <location>
        <begin position="490"/>
        <end position="506"/>
    </location>
</feature>
<feature type="compositionally biased region" description="Basic and acidic residues" evidence="4">
    <location>
        <begin position="697"/>
        <end position="716"/>
    </location>
</feature>
<feature type="modified residue" description="Phosphoserine" evidence="2">
    <location>
        <position position="380"/>
    </location>
</feature>
<feature type="modified residue" description="Phosphoserine" evidence="2">
    <location>
        <position position="429"/>
    </location>
</feature>
<feature type="modified residue" description="Phosphoserine" evidence="2">
    <location>
        <position position="477"/>
    </location>
</feature>
<organism>
    <name type="scientific">Mus musculus</name>
    <name type="common">Mouse</name>
    <dbReference type="NCBI Taxonomy" id="10090"/>
    <lineage>
        <taxon>Eukaryota</taxon>
        <taxon>Metazoa</taxon>
        <taxon>Chordata</taxon>
        <taxon>Craniata</taxon>
        <taxon>Vertebrata</taxon>
        <taxon>Euteleostomi</taxon>
        <taxon>Mammalia</taxon>
        <taxon>Eutheria</taxon>
        <taxon>Euarchontoglires</taxon>
        <taxon>Glires</taxon>
        <taxon>Rodentia</taxon>
        <taxon>Myomorpha</taxon>
        <taxon>Muroidea</taxon>
        <taxon>Muridae</taxon>
        <taxon>Murinae</taxon>
        <taxon>Mus</taxon>
        <taxon>Mus</taxon>
    </lineage>
</organism>
<proteinExistence type="evidence at protein level"/>
<sequence length="725" mass="80119">MEAAAAGRGGFQQPGLQKTLEQFHLSSMSSLGGPAVSRRAGQEAYKKESAKEAGAATVPAPVPTAAEPPPVLHLPAIQPPPPVLPGPFFMPSDRSTERCETVLEGETISCFVVGGEKRLCLPQILNSVLRDFSLQQINSVCDELHIYCSRCTADQLEILKVMGILPFSAPSCGLITKTDAERLCNALLYGGAYPPPCKKELAASLALGLELSERSVRVYHECFGKCKGLLVPELYSSPSAACIQCLDCRLMYPPHKFVVHSHKALENRTCHWGFDSANWRAYILLSQDYTGKEEQARLGRCLDDVKEKFDYANKYKRRVPRVSEPPASIRPKTDDTSSQSPASSEKDKQSTWLRTLAGSSNKSLGCTHPRQRLSAFRPWSPAVSASEKETSPHLPALIRDSFYSYKSFETAVAPNVALAPPTQQKVVNSPPCTTVVSRAPEPLTTCIQPRKRKLTLDTAGAPDMLTPVAAAEEDKDSEAEVEVESREEFTSSLSSLSSPSFTSSSSAKDLSSPGMHAPPVVAPDAAAHVDAPSGLEAELEHLRQALEGGLDTKEAKEKFLHEVVKMRVKQEEKLTAALQAKRTLHQELEFLRVAKKEKLREATEAKRNLRKEIERLRAENEKKMKEANESRVRLKRELEQARQVRVCDKGCEAGRLRAKYSAQVEDLQAKLQHAEADREQLRADLLREREAREHLEKVVRELQEQLRPRPRPEHPGGESNAELGP</sequence>
<comment type="function">
    <text>May play a role in terminal differentiation of skeletal muscle cells but not in the determination of cells to the myogenic lineage. Functions as a repressor of TGF-beta signaling.</text>
</comment>
<comment type="subunit">
    <text evidence="1">Interacts with SMAD2, SMAD3 and SMAD4. Interacts with HIPK2. Part of a complex with HIPK2 and SMAD1/2/3. Interacts with PRDM16 and SMAD3; the interaction with PRDM16 promotes the recruitment SMAD3-HDAC1 complex on the promoter of TGF-beta target genes (By similarity).</text>
</comment>
<comment type="interaction">
    <interactant intactId="EBI-15969860">
        <id>Q60698</id>
    </interactant>
    <interactant intactId="EBI-5737999">
        <id>Q8VI24</id>
        <label>Satb2</label>
    </interactant>
    <organismsDiffer>false</organismsDiffer>
    <experiments>3</experiments>
</comment>
<comment type="interaction">
    <interactant intactId="EBI-15969860">
        <id>Q60698</id>
    </interactant>
    <interactant intactId="EBI-5259270">
        <id>P97471</id>
        <label>Smad4</label>
    </interactant>
    <organismsDiffer>false</organismsDiffer>
    <experiments>3</experiments>
</comment>
<comment type="subcellular location">
    <subcellularLocation>
        <location>Nucleus</location>
    </subcellularLocation>
</comment>
<comment type="developmental stage">
    <text>Is expressed in a uniform pattern in all embryonic cells prior to skeletal muscle cell formation in the myotomes of somites. Expression is first up-regulated in skeletal muscle at 12 dpc, this up-regulation is evident first in body wall muscle and one day later in limb muscles. At 13.5 dpc a most prominent expression is seen in all skeletal muscles. At this stage expression is seen in all other cells and tissues but at lower levels than in skeletal muscle.</text>
</comment>
<comment type="PTM">
    <text evidence="5">Ubiquitinated by ARK2C, promoting proteasomal degradation, leading to enhance the BMP-Smad signaling.</text>
</comment>
<comment type="similarity">
    <text evidence="6">Belongs to the SKI family.</text>
</comment>
<name>SKI_MOUSE</name>
<gene>
    <name type="primary">Ski</name>
</gene>
<evidence type="ECO:0000250" key="1"/>
<evidence type="ECO:0000250" key="2">
    <source>
        <dbReference type="UniProtKB" id="P12755"/>
    </source>
</evidence>
<evidence type="ECO:0000255" key="3"/>
<evidence type="ECO:0000256" key="4">
    <source>
        <dbReference type="SAM" id="MobiDB-lite"/>
    </source>
</evidence>
<evidence type="ECO:0000269" key="5">
    <source>
    </source>
</evidence>
<evidence type="ECO:0000305" key="6"/>
<dbReference type="EMBL" id="AF435852">
    <property type="protein sequence ID" value="AAL30825.1"/>
    <property type="molecule type" value="mRNA"/>
</dbReference>
<dbReference type="EMBL" id="U14173">
    <property type="protein sequence ID" value="AAA99669.1"/>
    <property type="status" value="ALT_SEQ"/>
    <property type="molecule type" value="Genomic_DNA"/>
</dbReference>
<dbReference type="SMR" id="Q60698"/>
<dbReference type="CORUM" id="Q60698"/>
<dbReference type="DIP" id="DIP-60020N"/>
<dbReference type="FunCoup" id="Q60698">
    <property type="interactions" value="946"/>
</dbReference>
<dbReference type="IntAct" id="Q60698">
    <property type="interactions" value="3"/>
</dbReference>
<dbReference type="STRING" id="10090.ENSMUSP00000030917"/>
<dbReference type="GlyGen" id="Q60698">
    <property type="glycosylation" value="3 sites, 1 O-linked glycan (2 sites)"/>
</dbReference>
<dbReference type="iPTMnet" id="Q60698"/>
<dbReference type="PhosphoSitePlus" id="Q60698"/>
<dbReference type="jPOST" id="Q60698"/>
<dbReference type="PaxDb" id="10090-ENSMUSP00000030917"/>
<dbReference type="PeptideAtlas" id="Q60698"/>
<dbReference type="ProteomicsDB" id="261374"/>
<dbReference type="Pumba" id="Q60698"/>
<dbReference type="AGR" id="MGI:98310"/>
<dbReference type="MGI" id="MGI:98310">
    <property type="gene designation" value="Ski"/>
</dbReference>
<dbReference type="eggNOG" id="ENOG502QTF6">
    <property type="taxonomic scope" value="Eukaryota"/>
</dbReference>
<dbReference type="InParanoid" id="Q60698"/>
<dbReference type="Reactome" id="R-MMU-201451">
    <property type="pathway name" value="Signaling by BMP"/>
</dbReference>
<dbReference type="Reactome" id="R-MMU-2173795">
    <property type="pathway name" value="Downregulation of SMAD2/3:SMAD4 transcriptional activity"/>
</dbReference>
<dbReference type="ChiTaRS" id="Ski">
    <property type="organism name" value="mouse"/>
</dbReference>
<dbReference type="PRO" id="PR:Q60698"/>
<dbReference type="Proteomes" id="UP000000589">
    <property type="component" value="Unplaced"/>
</dbReference>
<dbReference type="RNAct" id="Q60698">
    <property type="molecule type" value="protein"/>
</dbReference>
<dbReference type="GO" id="GO:0005813">
    <property type="term" value="C:centrosome"/>
    <property type="evidence" value="ECO:0000266"/>
    <property type="project" value="MGI"/>
</dbReference>
<dbReference type="GO" id="GO:0005737">
    <property type="term" value="C:cytoplasm"/>
    <property type="evidence" value="ECO:0000314"/>
    <property type="project" value="MGI"/>
</dbReference>
<dbReference type="GO" id="GO:0016604">
    <property type="term" value="C:nuclear body"/>
    <property type="evidence" value="ECO:0000250"/>
    <property type="project" value="BHF-UCL"/>
</dbReference>
<dbReference type="GO" id="GO:0005654">
    <property type="term" value="C:nucleoplasm"/>
    <property type="evidence" value="ECO:0000250"/>
    <property type="project" value="BHF-UCL"/>
</dbReference>
<dbReference type="GO" id="GO:0005634">
    <property type="term" value="C:nucleus"/>
    <property type="evidence" value="ECO:0000314"/>
    <property type="project" value="MGI"/>
</dbReference>
<dbReference type="GO" id="GO:0016605">
    <property type="term" value="C:PML body"/>
    <property type="evidence" value="ECO:0000250"/>
    <property type="project" value="BHF-UCL"/>
</dbReference>
<dbReference type="GO" id="GO:0032991">
    <property type="term" value="C:protein-containing complex"/>
    <property type="evidence" value="ECO:0000266"/>
    <property type="project" value="MGI"/>
</dbReference>
<dbReference type="GO" id="GO:0005667">
    <property type="term" value="C:transcription regulator complex"/>
    <property type="evidence" value="ECO:0000353"/>
    <property type="project" value="MGI"/>
</dbReference>
<dbReference type="GO" id="GO:0017053">
    <property type="term" value="C:transcription repressor complex"/>
    <property type="evidence" value="ECO:0000314"/>
    <property type="project" value="MGI"/>
</dbReference>
<dbReference type="GO" id="GO:0003682">
    <property type="term" value="F:chromatin binding"/>
    <property type="evidence" value="ECO:0000316"/>
    <property type="project" value="MGI"/>
</dbReference>
<dbReference type="GO" id="GO:0140297">
    <property type="term" value="F:DNA-binding transcription factor binding"/>
    <property type="evidence" value="ECO:0000250"/>
    <property type="project" value="BHF-UCL"/>
</dbReference>
<dbReference type="GO" id="GO:0046811">
    <property type="term" value="F:histone deacetylase inhibitor activity"/>
    <property type="evidence" value="ECO:0000316"/>
    <property type="project" value="MGI"/>
</dbReference>
<dbReference type="GO" id="GO:0042802">
    <property type="term" value="F:identical protein binding"/>
    <property type="evidence" value="ECO:0000250"/>
    <property type="project" value="UniProtKB"/>
</dbReference>
<dbReference type="GO" id="GO:0019904">
    <property type="term" value="F:protein domain specific binding"/>
    <property type="evidence" value="ECO:0000250"/>
    <property type="project" value="BHF-UCL"/>
</dbReference>
<dbReference type="GO" id="GO:0019901">
    <property type="term" value="F:protein kinase binding"/>
    <property type="evidence" value="ECO:0000250"/>
    <property type="project" value="BHF-UCL"/>
</dbReference>
<dbReference type="GO" id="GO:0046332">
    <property type="term" value="F:SMAD binding"/>
    <property type="evidence" value="ECO:0000250"/>
    <property type="project" value="BHF-UCL"/>
</dbReference>
<dbReference type="GO" id="GO:0003714">
    <property type="term" value="F:transcription corepressor activity"/>
    <property type="evidence" value="ECO:0000315"/>
    <property type="project" value="MGI"/>
</dbReference>
<dbReference type="GO" id="GO:0031625">
    <property type="term" value="F:ubiquitin protein ligase binding"/>
    <property type="evidence" value="ECO:0000250"/>
    <property type="project" value="BHF-UCL"/>
</dbReference>
<dbReference type="GO" id="GO:0008270">
    <property type="term" value="F:zinc ion binding"/>
    <property type="evidence" value="ECO:0000250"/>
    <property type="project" value="BHF-UCL"/>
</dbReference>
<dbReference type="GO" id="GO:0009948">
    <property type="term" value="P:anterior/posterior axis specification"/>
    <property type="evidence" value="ECO:0000315"/>
    <property type="project" value="MGI"/>
</dbReference>
<dbReference type="GO" id="GO:0060349">
    <property type="term" value="P:bone morphogenesis"/>
    <property type="evidence" value="ECO:0000315"/>
    <property type="project" value="MGI"/>
</dbReference>
<dbReference type="GO" id="GO:0043010">
    <property type="term" value="P:camera-type eye development"/>
    <property type="evidence" value="ECO:0000315"/>
    <property type="project" value="MGI"/>
</dbReference>
<dbReference type="GO" id="GO:0048593">
    <property type="term" value="P:camera-type eye morphogenesis"/>
    <property type="evidence" value="ECO:0000315"/>
    <property type="project" value="MGI"/>
</dbReference>
<dbReference type="GO" id="GO:0030326">
    <property type="term" value="P:embryonic limb morphogenesis"/>
    <property type="evidence" value="ECO:0000315"/>
    <property type="project" value="MGI"/>
</dbReference>
<dbReference type="GO" id="GO:0060325">
    <property type="term" value="P:face morphogenesis"/>
    <property type="evidence" value="ECO:0000315"/>
    <property type="project" value="MGI"/>
</dbReference>
<dbReference type="GO" id="GO:0048144">
    <property type="term" value="P:fibroblast proliferation"/>
    <property type="evidence" value="ECO:0000315"/>
    <property type="project" value="MGI"/>
</dbReference>
<dbReference type="GO" id="GO:0002089">
    <property type="term" value="P:lens morphogenesis in camera-type eye"/>
    <property type="evidence" value="ECO:0000315"/>
    <property type="project" value="MGI"/>
</dbReference>
<dbReference type="GO" id="GO:0022011">
    <property type="term" value="P:myelination in peripheral nervous system"/>
    <property type="evidence" value="ECO:0000315"/>
    <property type="project" value="MGI"/>
</dbReference>
<dbReference type="GO" id="GO:0014902">
    <property type="term" value="P:myotube differentiation"/>
    <property type="evidence" value="ECO:0000314"/>
    <property type="project" value="MGI"/>
</dbReference>
<dbReference type="GO" id="GO:0032926">
    <property type="term" value="P:negative regulation of activin receptor signaling pathway"/>
    <property type="evidence" value="ECO:0000250"/>
    <property type="project" value="BHF-UCL"/>
</dbReference>
<dbReference type="GO" id="GO:0030514">
    <property type="term" value="P:negative regulation of BMP signaling pathway"/>
    <property type="evidence" value="ECO:0000316"/>
    <property type="project" value="MGI"/>
</dbReference>
<dbReference type="GO" id="GO:0008285">
    <property type="term" value="P:negative regulation of cell population proliferation"/>
    <property type="evidence" value="ECO:0000250"/>
    <property type="project" value="BHF-UCL"/>
</dbReference>
<dbReference type="GO" id="GO:0048147">
    <property type="term" value="P:negative regulation of fibroblast proliferation"/>
    <property type="evidence" value="ECO:0000315"/>
    <property type="project" value="MGI"/>
</dbReference>
<dbReference type="GO" id="GO:0045668">
    <property type="term" value="P:negative regulation of osteoblast differentiation"/>
    <property type="evidence" value="ECO:0000250"/>
    <property type="project" value="BHF-UCL"/>
</dbReference>
<dbReference type="GO" id="GO:0010626">
    <property type="term" value="P:negative regulation of Schwann cell proliferation"/>
    <property type="evidence" value="ECO:0000266"/>
    <property type="project" value="MGI"/>
</dbReference>
<dbReference type="GO" id="GO:0060392">
    <property type="term" value="P:negative regulation of SMAD protein signal transduction"/>
    <property type="evidence" value="ECO:0000250"/>
    <property type="project" value="BHF-UCL"/>
</dbReference>
<dbReference type="GO" id="GO:0000122">
    <property type="term" value="P:negative regulation of transcription by RNA polymerase II"/>
    <property type="evidence" value="ECO:0000316"/>
    <property type="project" value="MGI"/>
</dbReference>
<dbReference type="GO" id="GO:0016480">
    <property type="term" value="P:negative regulation of transcription by RNA polymerase III"/>
    <property type="evidence" value="ECO:0000315"/>
    <property type="project" value="MGI"/>
</dbReference>
<dbReference type="GO" id="GO:0030512">
    <property type="term" value="P:negative regulation of transforming growth factor beta receptor signaling pathway"/>
    <property type="evidence" value="ECO:0000316"/>
    <property type="project" value="MGI"/>
</dbReference>
<dbReference type="GO" id="GO:0001843">
    <property type="term" value="P:neural tube closure"/>
    <property type="evidence" value="ECO:0000315"/>
    <property type="project" value="MGI"/>
</dbReference>
<dbReference type="GO" id="GO:0043585">
    <property type="term" value="P:nose morphogenesis"/>
    <property type="evidence" value="ECO:0000315"/>
    <property type="project" value="MGI"/>
</dbReference>
<dbReference type="GO" id="GO:0021772">
    <property type="term" value="P:olfactory bulb development"/>
    <property type="evidence" value="ECO:0000315"/>
    <property type="project" value="MGI"/>
</dbReference>
<dbReference type="GO" id="GO:0043388">
    <property type="term" value="P:positive regulation of DNA binding"/>
    <property type="evidence" value="ECO:0000250"/>
    <property type="project" value="BHF-UCL"/>
</dbReference>
<dbReference type="GO" id="GO:0045944">
    <property type="term" value="P:positive regulation of transcription by RNA polymerase II"/>
    <property type="evidence" value="ECO:0000314"/>
    <property type="project" value="MGI"/>
</dbReference>
<dbReference type="GO" id="GO:0070208">
    <property type="term" value="P:protein heterotrimerization"/>
    <property type="evidence" value="ECO:0000250"/>
    <property type="project" value="BHF-UCL"/>
</dbReference>
<dbReference type="GO" id="GO:0060041">
    <property type="term" value="P:retina development in camera-type eye"/>
    <property type="evidence" value="ECO:0000315"/>
    <property type="project" value="MGI"/>
</dbReference>
<dbReference type="GO" id="GO:0060021">
    <property type="term" value="P:roof of mouth development"/>
    <property type="evidence" value="ECO:0000315"/>
    <property type="project" value="MGI"/>
</dbReference>
<dbReference type="GO" id="GO:0048741">
    <property type="term" value="P:skeletal muscle fiber development"/>
    <property type="evidence" value="ECO:0000315"/>
    <property type="project" value="MGI"/>
</dbReference>
<dbReference type="GO" id="GO:0035019">
    <property type="term" value="P:somatic stem cell population maintenance"/>
    <property type="evidence" value="ECO:0000314"/>
    <property type="project" value="MGI"/>
</dbReference>
<dbReference type="CDD" id="cd21083">
    <property type="entry name" value="DHD_Ski"/>
    <property type="match status" value="1"/>
</dbReference>
<dbReference type="FunFam" id="3.10.390.10:FF:000002">
    <property type="entry name" value="Putative ski oncogene"/>
    <property type="match status" value="1"/>
</dbReference>
<dbReference type="FunFam" id="3.10.260.20:FF:000002">
    <property type="entry name" value="SKI-like oncogene a"/>
    <property type="match status" value="1"/>
</dbReference>
<dbReference type="Gene3D" id="3.10.390.10">
    <property type="entry name" value="SAND domain-like"/>
    <property type="match status" value="1"/>
</dbReference>
<dbReference type="Gene3D" id="3.10.260.20">
    <property type="entry name" value="Ski"/>
    <property type="match status" value="1"/>
</dbReference>
<dbReference type="InterPro" id="IPR014890">
    <property type="entry name" value="c-SKI_SMAD4-bd_dom"/>
</dbReference>
<dbReference type="InterPro" id="IPR047315">
    <property type="entry name" value="DHD_Ski"/>
</dbReference>
<dbReference type="InterPro" id="IPR009061">
    <property type="entry name" value="DNA-bd_dom_put_sf"/>
</dbReference>
<dbReference type="InterPro" id="IPR010919">
    <property type="entry name" value="SAND-like_dom_sf"/>
</dbReference>
<dbReference type="InterPro" id="IPR003380">
    <property type="entry name" value="SKI/SNO/DAC"/>
</dbReference>
<dbReference type="InterPro" id="IPR037000">
    <property type="entry name" value="Ski_DNA-bd_sf"/>
</dbReference>
<dbReference type="InterPro" id="IPR023216">
    <property type="entry name" value="Tscrpt_reg_SKI_SnoN"/>
</dbReference>
<dbReference type="PANTHER" id="PTHR10005:SF15">
    <property type="entry name" value="SKI ONCOGENE"/>
    <property type="match status" value="1"/>
</dbReference>
<dbReference type="PANTHER" id="PTHR10005">
    <property type="entry name" value="SKI ONCOGENE-RELATED"/>
    <property type="match status" value="1"/>
</dbReference>
<dbReference type="Pfam" id="PF08782">
    <property type="entry name" value="c-SKI_SMAD_bind"/>
    <property type="match status" value="1"/>
</dbReference>
<dbReference type="Pfam" id="PF02437">
    <property type="entry name" value="Ski_Sno_DHD"/>
    <property type="match status" value="1"/>
</dbReference>
<dbReference type="SMART" id="SM01046">
    <property type="entry name" value="c-SKI_SMAD_bind"/>
    <property type="match status" value="1"/>
</dbReference>
<dbReference type="SUPFAM" id="SSF46955">
    <property type="entry name" value="Putative DNA-binding domain"/>
    <property type="match status" value="1"/>
</dbReference>
<dbReference type="SUPFAM" id="SSF63763">
    <property type="entry name" value="SAND domain-like"/>
    <property type="match status" value="1"/>
</dbReference>
<keyword id="KW-0175">Coiled coil</keyword>
<keyword id="KW-0539">Nucleus</keyword>
<keyword id="KW-0597">Phosphoprotein</keyword>
<keyword id="KW-0656">Proto-oncogene</keyword>
<keyword id="KW-1185">Reference proteome</keyword>
<keyword id="KW-0677">Repeat</keyword>
<keyword id="KW-0832">Ubl conjugation</keyword>
<protein>
    <recommendedName>
        <fullName>Ski oncogene</fullName>
    </recommendedName>
    <alternativeName>
        <fullName>Proto-oncogene c-Ski</fullName>
    </alternativeName>
</protein>